<feature type="chain" id="PRO_0000334358" description="Na(+)/H(+) antiporter NhaA 2">
    <location>
        <begin position="1"/>
        <end position="438"/>
    </location>
</feature>
<feature type="transmembrane region" description="Helical" evidence="1">
    <location>
        <begin position="21"/>
        <end position="41"/>
    </location>
</feature>
<feature type="transmembrane region" description="Helical" evidence="1">
    <location>
        <begin position="66"/>
        <end position="86"/>
    </location>
</feature>
<feature type="transmembrane region" description="Helical" evidence="1">
    <location>
        <begin position="102"/>
        <end position="122"/>
    </location>
</feature>
<feature type="transmembrane region" description="Helical" evidence="1">
    <location>
        <begin position="130"/>
        <end position="150"/>
    </location>
</feature>
<feature type="transmembrane region" description="Helical" evidence="1">
    <location>
        <begin position="160"/>
        <end position="180"/>
    </location>
</feature>
<feature type="transmembrane region" description="Helical" evidence="1">
    <location>
        <begin position="183"/>
        <end position="203"/>
    </location>
</feature>
<feature type="transmembrane region" description="Helical" evidence="1">
    <location>
        <begin position="206"/>
        <end position="226"/>
    </location>
</feature>
<feature type="transmembrane region" description="Helical" evidence="1">
    <location>
        <begin position="308"/>
        <end position="328"/>
    </location>
</feature>
<feature type="transmembrane region" description="Helical" evidence="1">
    <location>
        <begin position="341"/>
        <end position="361"/>
    </location>
</feature>
<feature type="transmembrane region" description="Helical" evidence="1">
    <location>
        <begin position="376"/>
        <end position="396"/>
    </location>
</feature>
<feature type="transmembrane region" description="Helical" evidence="1">
    <location>
        <begin position="410"/>
        <end position="430"/>
    </location>
</feature>
<protein>
    <recommendedName>
        <fullName evidence="1">Na(+)/H(+) antiporter NhaA 2</fullName>
    </recommendedName>
    <alternativeName>
        <fullName evidence="1">Sodium/proton antiporter NhaA 2</fullName>
    </alternativeName>
</protein>
<dbReference type="EMBL" id="CP000142">
    <property type="protein sequence ID" value="ABA89695.1"/>
    <property type="molecule type" value="Genomic_DNA"/>
</dbReference>
<dbReference type="RefSeq" id="WP_011342222.1">
    <property type="nucleotide sequence ID" value="NC_007498.2"/>
</dbReference>
<dbReference type="SMR" id="Q3A1R2"/>
<dbReference type="STRING" id="338963.Pcar_2456"/>
<dbReference type="KEGG" id="pca:Pcar_2456"/>
<dbReference type="eggNOG" id="COG3004">
    <property type="taxonomic scope" value="Bacteria"/>
</dbReference>
<dbReference type="HOGENOM" id="CLU_015803_1_2_7"/>
<dbReference type="OrthoDB" id="9808135at2"/>
<dbReference type="Proteomes" id="UP000002534">
    <property type="component" value="Chromosome"/>
</dbReference>
<dbReference type="GO" id="GO:0005886">
    <property type="term" value="C:plasma membrane"/>
    <property type="evidence" value="ECO:0007669"/>
    <property type="project" value="UniProtKB-SubCell"/>
</dbReference>
<dbReference type="GO" id="GO:0015385">
    <property type="term" value="F:sodium:proton antiporter activity"/>
    <property type="evidence" value="ECO:0007669"/>
    <property type="project" value="TreeGrafter"/>
</dbReference>
<dbReference type="GO" id="GO:0006885">
    <property type="term" value="P:regulation of pH"/>
    <property type="evidence" value="ECO:0007669"/>
    <property type="project" value="InterPro"/>
</dbReference>
<dbReference type="Gene3D" id="1.20.1530.10">
    <property type="entry name" value="Na+/H+ antiporter like domain"/>
    <property type="match status" value="1"/>
</dbReference>
<dbReference type="HAMAP" id="MF_01844">
    <property type="entry name" value="NhaA"/>
    <property type="match status" value="1"/>
</dbReference>
<dbReference type="InterPro" id="IPR023171">
    <property type="entry name" value="Na/H_antiporter_dom_sf"/>
</dbReference>
<dbReference type="InterPro" id="IPR004670">
    <property type="entry name" value="NhaA"/>
</dbReference>
<dbReference type="NCBIfam" id="TIGR00773">
    <property type="entry name" value="NhaA"/>
    <property type="match status" value="1"/>
</dbReference>
<dbReference type="PANTHER" id="PTHR30341:SF0">
    <property type="entry name" value="NA(+)_H(+) ANTIPORTER NHAA"/>
    <property type="match status" value="1"/>
</dbReference>
<dbReference type="PANTHER" id="PTHR30341">
    <property type="entry name" value="SODIUM ION/PROTON ANTIPORTER NHAA-RELATED"/>
    <property type="match status" value="1"/>
</dbReference>
<dbReference type="Pfam" id="PF06965">
    <property type="entry name" value="Na_H_antiport_1"/>
    <property type="match status" value="1"/>
</dbReference>
<comment type="function">
    <text evidence="1">Na(+)/H(+) antiporter that extrudes sodium in exchange for external protons.</text>
</comment>
<comment type="catalytic activity">
    <reaction evidence="1">
        <text>Na(+)(in) + 2 H(+)(out) = Na(+)(out) + 2 H(+)(in)</text>
        <dbReference type="Rhea" id="RHEA:29251"/>
        <dbReference type="ChEBI" id="CHEBI:15378"/>
        <dbReference type="ChEBI" id="CHEBI:29101"/>
    </reaction>
    <physiologicalReaction direction="left-to-right" evidence="1">
        <dbReference type="Rhea" id="RHEA:29252"/>
    </physiologicalReaction>
</comment>
<comment type="subcellular location">
    <subcellularLocation>
        <location evidence="1">Cell inner membrane</location>
        <topology evidence="1">Multi-pass membrane protein</topology>
    </subcellularLocation>
</comment>
<comment type="similarity">
    <text evidence="1">Belongs to the NhaA Na(+)/H(+) (TC 2.A.33) antiporter family.</text>
</comment>
<reference key="1">
    <citation type="submission" date="2005-10" db="EMBL/GenBank/DDBJ databases">
        <title>Complete sequence of Pelobacter carbinolicus DSM 2380.</title>
        <authorList>
            <person name="Copeland A."/>
            <person name="Lucas S."/>
            <person name="Lapidus A."/>
            <person name="Barry K."/>
            <person name="Detter J.C."/>
            <person name="Glavina T."/>
            <person name="Hammon N."/>
            <person name="Israni S."/>
            <person name="Pitluck S."/>
            <person name="Chertkov O."/>
            <person name="Schmutz J."/>
            <person name="Larimer F."/>
            <person name="Land M."/>
            <person name="Kyrpides N."/>
            <person name="Ivanova N."/>
            <person name="Richardson P."/>
        </authorList>
    </citation>
    <scope>NUCLEOTIDE SEQUENCE [LARGE SCALE GENOMIC DNA]</scope>
    <source>
        <strain>DSM 2380 / NBRC 103641 / GraBd1</strain>
    </source>
</reference>
<keyword id="KW-0050">Antiport</keyword>
<keyword id="KW-0997">Cell inner membrane</keyword>
<keyword id="KW-1003">Cell membrane</keyword>
<keyword id="KW-0406">Ion transport</keyword>
<keyword id="KW-0472">Membrane</keyword>
<keyword id="KW-1185">Reference proteome</keyword>
<keyword id="KW-0915">Sodium</keyword>
<keyword id="KW-0739">Sodium transport</keyword>
<keyword id="KW-0812">Transmembrane</keyword>
<keyword id="KW-1133">Transmembrane helix</keyword>
<keyword id="KW-0813">Transport</keyword>
<accession>Q3A1R2</accession>
<gene>
    <name evidence="1" type="primary">nhaA2</name>
    <name type="ordered locus">Pcar_2456</name>
</gene>
<sequence>MPFRIAFLKQPFEDFFKHQASGGIVLLGATVLALVLANSPWSGQYFHFWEIKLTIGFDHFGLTQTLHHWINDGLMAVFFFLVGLELKREFMDGELASFRQAMLPIAAAFGGMLVPALIFHFINPMVPEAKGWGIPMATDIAFALGVLALLRGKISRSLAIFLTALAIVDDLGAVLVIALFYSGELAVGKLLVALVLLLILIAGNRLGVQSLNFYGLLGFCLWVVLLKSGLHASIAGVLIGMVIPARPRLCHEEFVDQTEKYMARYKEIGEVPGPFHHEERLGALLALEHICHDAMSSLQRMEHELHHWVIFGVIPIFALANAGLVLQLGNLVTAVTHPVTLGVALGLLLGKPLGILFFSWISVRVGLCALPRGTSWMDVFGVGILGGIGFTMSLFISNLAFMNIVMSNNAKLGIFIASMLAGAAGFTVLSRASARKAH</sequence>
<evidence type="ECO:0000255" key="1">
    <source>
        <dbReference type="HAMAP-Rule" id="MF_01844"/>
    </source>
</evidence>
<proteinExistence type="inferred from homology"/>
<name>NHAA2_SYNC1</name>
<organism>
    <name type="scientific">Syntrophotalea carbinolica (strain DSM 2380 / NBRC 103641 / GraBd1)</name>
    <name type="common">Pelobacter carbinolicus</name>
    <dbReference type="NCBI Taxonomy" id="338963"/>
    <lineage>
        <taxon>Bacteria</taxon>
        <taxon>Pseudomonadati</taxon>
        <taxon>Thermodesulfobacteriota</taxon>
        <taxon>Desulfuromonadia</taxon>
        <taxon>Desulfuromonadales</taxon>
        <taxon>Syntrophotaleaceae</taxon>
        <taxon>Syntrophotalea</taxon>
    </lineage>
</organism>